<protein>
    <recommendedName>
        <fullName evidence="1">tRNA-specific 2-thiouridylase MnmA</fullName>
        <ecNumber evidence="1">2.8.1.13</ecNumber>
    </recommendedName>
</protein>
<gene>
    <name evidence="1" type="primary">mnmA</name>
    <name type="synonym">trmU</name>
    <name type="ordered locus">RP306</name>
</gene>
<feature type="chain" id="PRO_0000121670" description="tRNA-specific 2-thiouridylase MnmA">
    <location>
        <begin position="1"/>
        <end position="358"/>
    </location>
</feature>
<feature type="region of interest" description="Interaction with tRNA" evidence="1">
    <location>
        <begin position="147"/>
        <end position="149"/>
    </location>
</feature>
<feature type="active site" description="Nucleophile" evidence="1">
    <location>
        <position position="101"/>
    </location>
</feature>
<feature type="active site" description="Cysteine persulfide intermediate" evidence="1">
    <location>
        <position position="197"/>
    </location>
</feature>
<feature type="binding site" evidence="1">
    <location>
        <begin position="7"/>
        <end position="14"/>
    </location>
    <ligand>
        <name>ATP</name>
        <dbReference type="ChEBI" id="CHEBI:30616"/>
    </ligand>
</feature>
<feature type="binding site" evidence="1">
    <location>
        <position position="33"/>
    </location>
    <ligand>
        <name>ATP</name>
        <dbReference type="ChEBI" id="CHEBI:30616"/>
    </ligand>
</feature>
<feature type="binding site" evidence="1">
    <location>
        <position position="125"/>
    </location>
    <ligand>
        <name>ATP</name>
        <dbReference type="ChEBI" id="CHEBI:30616"/>
    </ligand>
</feature>
<feature type="site" description="Interaction with tRNA" evidence="1">
    <location>
        <position position="126"/>
    </location>
</feature>
<feature type="site" description="Interaction with tRNA" evidence="1">
    <location>
        <position position="337"/>
    </location>
</feature>
<feature type="disulfide bond" description="Alternate" evidence="1">
    <location>
        <begin position="101"/>
        <end position="197"/>
    </location>
</feature>
<keyword id="KW-0067">ATP-binding</keyword>
<keyword id="KW-0963">Cytoplasm</keyword>
<keyword id="KW-1015">Disulfide bond</keyword>
<keyword id="KW-0547">Nucleotide-binding</keyword>
<keyword id="KW-1185">Reference proteome</keyword>
<keyword id="KW-0694">RNA-binding</keyword>
<keyword id="KW-0808">Transferase</keyword>
<keyword id="KW-0819">tRNA processing</keyword>
<keyword id="KW-0820">tRNA-binding</keyword>
<comment type="function">
    <text evidence="1">Catalyzes the 2-thiolation of uridine at the wobble position (U34) of tRNA, leading to the formation of s(2)U34.</text>
</comment>
<comment type="catalytic activity">
    <reaction evidence="1">
        <text>S-sulfanyl-L-cysteinyl-[protein] + uridine(34) in tRNA + AH2 + ATP = 2-thiouridine(34) in tRNA + L-cysteinyl-[protein] + A + AMP + diphosphate + H(+)</text>
        <dbReference type="Rhea" id="RHEA:47032"/>
        <dbReference type="Rhea" id="RHEA-COMP:10131"/>
        <dbReference type="Rhea" id="RHEA-COMP:11726"/>
        <dbReference type="Rhea" id="RHEA-COMP:11727"/>
        <dbReference type="Rhea" id="RHEA-COMP:11728"/>
        <dbReference type="ChEBI" id="CHEBI:13193"/>
        <dbReference type="ChEBI" id="CHEBI:15378"/>
        <dbReference type="ChEBI" id="CHEBI:17499"/>
        <dbReference type="ChEBI" id="CHEBI:29950"/>
        <dbReference type="ChEBI" id="CHEBI:30616"/>
        <dbReference type="ChEBI" id="CHEBI:33019"/>
        <dbReference type="ChEBI" id="CHEBI:61963"/>
        <dbReference type="ChEBI" id="CHEBI:65315"/>
        <dbReference type="ChEBI" id="CHEBI:87170"/>
        <dbReference type="ChEBI" id="CHEBI:456215"/>
        <dbReference type="EC" id="2.8.1.13"/>
    </reaction>
</comment>
<comment type="subcellular location">
    <subcellularLocation>
        <location evidence="1">Cytoplasm</location>
    </subcellularLocation>
</comment>
<comment type="similarity">
    <text evidence="1">Belongs to the MnmA/TRMU family.</text>
</comment>
<organism>
    <name type="scientific">Rickettsia prowazekii (strain Madrid E)</name>
    <dbReference type="NCBI Taxonomy" id="272947"/>
    <lineage>
        <taxon>Bacteria</taxon>
        <taxon>Pseudomonadati</taxon>
        <taxon>Pseudomonadota</taxon>
        <taxon>Alphaproteobacteria</taxon>
        <taxon>Rickettsiales</taxon>
        <taxon>Rickettsiaceae</taxon>
        <taxon>Rickettsieae</taxon>
        <taxon>Rickettsia</taxon>
        <taxon>typhus group</taxon>
    </lineage>
</organism>
<dbReference type="EC" id="2.8.1.13" evidence="1"/>
<dbReference type="EMBL" id="AJ235271">
    <property type="protein sequence ID" value="CAA14767.1"/>
    <property type="molecule type" value="Genomic_DNA"/>
</dbReference>
<dbReference type="PIR" id="E71686">
    <property type="entry name" value="E71686"/>
</dbReference>
<dbReference type="RefSeq" id="NP_220690.1">
    <property type="nucleotide sequence ID" value="NC_000963.1"/>
</dbReference>
<dbReference type="RefSeq" id="WP_004597398.1">
    <property type="nucleotide sequence ID" value="NC_000963.1"/>
</dbReference>
<dbReference type="SMR" id="Q9ZDM1"/>
<dbReference type="STRING" id="272947.gene:17555387"/>
<dbReference type="EnsemblBacteria" id="CAA14767">
    <property type="protein sequence ID" value="CAA14767"/>
    <property type="gene ID" value="CAA14767"/>
</dbReference>
<dbReference type="GeneID" id="57569433"/>
<dbReference type="KEGG" id="rpr:RP306"/>
<dbReference type="PATRIC" id="fig|272947.5.peg.315"/>
<dbReference type="eggNOG" id="COG0482">
    <property type="taxonomic scope" value="Bacteria"/>
</dbReference>
<dbReference type="HOGENOM" id="CLU_035188_0_1_5"/>
<dbReference type="OrthoDB" id="9800696at2"/>
<dbReference type="Proteomes" id="UP000002480">
    <property type="component" value="Chromosome"/>
</dbReference>
<dbReference type="GO" id="GO:0005737">
    <property type="term" value="C:cytoplasm"/>
    <property type="evidence" value="ECO:0007669"/>
    <property type="project" value="UniProtKB-SubCell"/>
</dbReference>
<dbReference type="GO" id="GO:0005524">
    <property type="term" value="F:ATP binding"/>
    <property type="evidence" value="ECO:0007669"/>
    <property type="project" value="UniProtKB-KW"/>
</dbReference>
<dbReference type="GO" id="GO:0000049">
    <property type="term" value="F:tRNA binding"/>
    <property type="evidence" value="ECO:0007669"/>
    <property type="project" value="UniProtKB-KW"/>
</dbReference>
<dbReference type="GO" id="GO:0103016">
    <property type="term" value="F:tRNA-uridine 2-sulfurtransferase activity"/>
    <property type="evidence" value="ECO:0007669"/>
    <property type="project" value="UniProtKB-EC"/>
</dbReference>
<dbReference type="GO" id="GO:0002143">
    <property type="term" value="P:tRNA wobble position uridine thiolation"/>
    <property type="evidence" value="ECO:0007669"/>
    <property type="project" value="TreeGrafter"/>
</dbReference>
<dbReference type="CDD" id="cd01998">
    <property type="entry name" value="MnmA_TRMU-like"/>
    <property type="match status" value="1"/>
</dbReference>
<dbReference type="FunFam" id="2.30.30.280:FF:000001">
    <property type="entry name" value="tRNA-specific 2-thiouridylase MnmA"/>
    <property type="match status" value="1"/>
</dbReference>
<dbReference type="FunFam" id="2.40.30.10:FF:000127">
    <property type="entry name" value="tRNA-specific 2-thiouridylase MnmA"/>
    <property type="match status" value="1"/>
</dbReference>
<dbReference type="FunFam" id="3.40.50.620:FF:000115">
    <property type="entry name" value="tRNA-specific 2-thiouridylase MnmA"/>
    <property type="match status" value="1"/>
</dbReference>
<dbReference type="Gene3D" id="2.30.30.280">
    <property type="entry name" value="Adenine nucleotide alpha hydrolases-like domains"/>
    <property type="match status" value="1"/>
</dbReference>
<dbReference type="Gene3D" id="3.40.50.620">
    <property type="entry name" value="HUPs"/>
    <property type="match status" value="1"/>
</dbReference>
<dbReference type="Gene3D" id="2.40.30.10">
    <property type="entry name" value="Translation factors"/>
    <property type="match status" value="1"/>
</dbReference>
<dbReference type="HAMAP" id="MF_00144">
    <property type="entry name" value="tRNA_thiouridyl_MnmA"/>
    <property type="match status" value="1"/>
</dbReference>
<dbReference type="InterPro" id="IPR004506">
    <property type="entry name" value="MnmA-like"/>
</dbReference>
<dbReference type="InterPro" id="IPR046885">
    <property type="entry name" value="MnmA-like_C"/>
</dbReference>
<dbReference type="InterPro" id="IPR046884">
    <property type="entry name" value="MnmA-like_central"/>
</dbReference>
<dbReference type="InterPro" id="IPR023382">
    <property type="entry name" value="MnmA-like_central_sf"/>
</dbReference>
<dbReference type="InterPro" id="IPR014729">
    <property type="entry name" value="Rossmann-like_a/b/a_fold"/>
</dbReference>
<dbReference type="NCBIfam" id="NF001138">
    <property type="entry name" value="PRK00143.1"/>
    <property type="match status" value="1"/>
</dbReference>
<dbReference type="NCBIfam" id="TIGR00420">
    <property type="entry name" value="trmU"/>
    <property type="match status" value="1"/>
</dbReference>
<dbReference type="PANTHER" id="PTHR11933:SF5">
    <property type="entry name" value="MITOCHONDRIAL TRNA-SPECIFIC 2-THIOURIDYLASE 1"/>
    <property type="match status" value="1"/>
</dbReference>
<dbReference type="PANTHER" id="PTHR11933">
    <property type="entry name" value="TRNA 5-METHYLAMINOMETHYL-2-THIOURIDYLATE -METHYLTRANSFERASE"/>
    <property type="match status" value="1"/>
</dbReference>
<dbReference type="Pfam" id="PF03054">
    <property type="entry name" value="tRNA_Me_trans"/>
    <property type="match status" value="1"/>
</dbReference>
<dbReference type="Pfam" id="PF20258">
    <property type="entry name" value="tRNA_Me_trans_C"/>
    <property type="match status" value="1"/>
</dbReference>
<dbReference type="Pfam" id="PF20259">
    <property type="entry name" value="tRNA_Me_trans_M"/>
    <property type="match status" value="1"/>
</dbReference>
<dbReference type="SUPFAM" id="SSF52402">
    <property type="entry name" value="Adenine nucleotide alpha hydrolases-like"/>
    <property type="match status" value="1"/>
</dbReference>
<proteinExistence type="inferred from homology"/>
<sequence length="358" mass="39533">MATIVVAMSGGVDSSAVAAMLHEQGHNVIGITLQLYDYGIAVGKKNACCAGQDIYDAKMVANKLGIPHYVLDYENKFKESVIDNFVDSYLHGETPLPCVQCNKSVKFRDLINTAKELGADKLATGHYVRKINGYNGAELHTGLDTTKDQSYFLFTITREQLEYLSFPLGGFTKYETRKLASKFGLDIADKPDSQDICFVPDGNYKTVINKIRPEANTSGKIVHINGFELGEHSGIINYTIGQRRGLGIAYNEPLYVVKIDPSNNIVYVGQESALHVHEFIIKDVNWLADEIKDHEKLAVDVKIRSTRPPCHAEISKLCNDRIKVKFLSKEKAVAPGQACVIYAGERVLGGGWITSNIS</sequence>
<evidence type="ECO:0000255" key="1">
    <source>
        <dbReference type="HAMAP-Rule" id="MF_00144"/>
    </source>
</evidence>
<name>MNMA_RICPR</name>
<accession>Q9ZDM1</accession>
<reference key="1">
    <citation type="journal article" date="1998" name="Nature">
        <title>The genome sequence of Rickettsia prowazekii and the origin of mitochondria.</title>
        <authorList>
            <person name="Andersson S.G.E."/>
            <person name="Zomorodipour A."/>
            <person name="Andersson J.O."/>
            <person name="Sicheritz-Ponten T."/>
            <person name="Alsmark U.C.M."/>
            <person name="Podowski R.M."/>
            <person name="Naeslund A.K."/>
            <person name="Eriksson A.-S."/>
            <person name="Winkler H.H."/>
            <person name="Kurland C.G."/>
        </authorList>
    </citation>
    <scope>NUCLEOTIDE SEQUENCE [LARGE SCALE GENOMIC DNA]</scope>
    <source>
        <strain>Madrid E</strain>
    </source>
</reference>